<dbReference type="EMBL" id="CP000312">
    <property type="protein sequence ID" value="ABG85800.1"/>
    <property type="molecule type" value="Genomic_DNA"/>
</dbReference>
<dbReference type="RefSeq" id="WP_003451474.1">
    <property type="nucleotide sequence ID" value="NZ_CAXVKH010000002.1"/>
</dbReference>
<dbReference type="SMR" id="Q0SRX1"/>
<dbReference type="KEGG" id="cpr:CPR_1821"/>
<dbReference type="Proteomes" id="UP000001824">
    <property type="component" value="Chromosome"/>
</dbReference>
<dbReference type="GO" id="GO:0005737">
    <property type="term" value="C:cytoplasm"/>
    <property type="evidence" value="ECO:0007669"/>
    <property type="project" value="UniProtKB-SubCell"/>
</dbReference>
<dbReference type="GO" id="GO:0000917">
    <property type="term" value="P:division septum assembly"/>
    <property type="evidence" value="ECO:0007669"/>
    <property type="project" value="UniProtKB-KW"/>
</dbReference>
<dbReference type="GO" id="GO:0043093">
    <property type="term" value="P:FtsZ-dependent cytokinesis"/>
    <property type="evidence" value="ECO:0007669"/>
    <property type="project" value="UniProtKB-UniRule"/>
</dbReference>
<dbReference type="Gene3D" id="3.30.110.150">
    <property type="entry name" value="SepF-like protein"/>
    <property type="match status" value="1"/>
</dbReference>
<dbReference type="HAMAP" id="MF_01197">
    <property type="entry name" value="SepF"/>
    <property type="match status" value="1"/>
</dbReference>
<dbReference type="InterPro" id="IPR023052">
    <property type="entry name" value="Cell_div_SepF"/>
</dbReference>
<dbReference type="InterPro" id="IPR007561">
    <property type="entry name" value="Cell_div_SepF/SepF-rel"/>
</dbReference>
<dbReference type="InterPro" id="IPR038594">
    <property type="entry name" value="SepF-like_sf"/>
</dbReference>
<dbReference type="PANTHER" id="PTHR35798">
    <property type="entry name" value="CELL DIVISION PROTEIN SEPF"/>
    <property type="match status" value="1"/>
</dbReference>
<dbReference type="PANTHER" id="PTHR35798:SF1">
    <property type="entry name" value="CELL DIVISION PROTEIN SEPF"/>
    <property type="match status" value="1"/>
</dbReference>
<dbReference type="Pfam" id="PF04472">
    <property type="entry name" value="SepF"/>
    <property type="match status" value="1"/>
</dbReference>
<gene>
    <name evidence="1" type="primary">sepF</name>
    <name type="ordered locus">CPR_1821</name>
</gene>
<keyword id="KW-0131">Cell cycle</keyword>
<keyword id="KW-0132">Cell division</keyword>
<keyword id="KW-0963">Cytoplasm</keyword>
<keyword id="KW-0717">Septation</keyword>
<feature type="chain" id="PRO_0000334001" description="Cell division protein SepF">
    <location>
        <begin position="1"/>
        <end position="149"/>
    </location>
</feature>
<name>SEPF_CLOPS</name>
<proteinExistence type="inferred from homology"/>
<comment type="function">
    <text evidence="1">Cell division protein that is part of the divisome complex and is recruited early to the Z-ring. Probably stimulates Z-ring formation, perhaps through the cross-linking of FtsZ protofilaments. Its function overlaps with FtsA.</text>
</comment>
<comment type="subunit">
    <text evidence="1">Homodimer. Interacts with FtsZ.</text>
</comment>
<comment type="subcellular location">
    <subcellularLocation>
        <location evidence="1">Cytoplasm</location>
    </subcellularLocation>
    <text evidence="1">Localizes to the division site, in a FtsZ-dependent manner.</text>
</comment>
<comment type="similarity">
    <text evidence="1">Belongs to the SepF family.</text>
</comment>
<accession>Q0SRX1</accession>
<sequence>MSKVVSKMKSFLGFDEFEDEDEVMEEEEVMEEEESFAPVLSSKKNGKVVNIHTANTAKLMITKPLVYDDATEICTALKNRKIVVINTTSLELRTAQRLIDFVGGACYALCGELQEVEKGVFIVSPSNVEVSNELKSELSNKGMFNWASK</sequence>
<organism>
    <name type="scientific">Clostridium perfringens (strain SM101 / Type A)</name>
    <dbReference type="NCBI Taxonomy" id="289380"/>
    <lineage>
        <taxon>Bacteria</taxon>
        <taxon>Bacillati</taxon>
        <taxon>Bacillota</taxon>
        <taxon>Clostridia</taxon>
        <taxon>Eubacteriales</taxon>
        <taxon>Clostridiaceae</taxon>
        <taxon>Clostridium</taxon>
    </lineage>
</organism>
<protein>
    <recommendedName>
        <fullName evidence="1">Cell division protein SepF</fullName>
    </recommendedName>
</protein>
<reference key="1">
    <citation type="journal article" date="2006" name="Genome Res.">
        <title>Skewed genomic variability in strains of the toxigenic bacterial pathogen, Clostridium perfringens.</title>
        <authorList>
            <person name="Myers G.S.A."/>
            <person name="Rasko D.A."/>
            <person name="Cheung J.K."/>
            <person name="Ravel J."/>
            <person name="Seshadri R."/>
            <person name="DeBoy R.T."/>
            <person name="Ren Q."/>
            <person name="Varga J."/>
            <person name="Awad M.M."/>
            <person name="Brinkac L.M."/>
            <person name="Daugherty S.C."/>
            <person name="Haft D.H."/>
            <person name="Dodson R.J."/>
            <person name="Madupu R."/>
            <person name="Nelson W.C."/>
            <person name="Rosovitz M.J."/>
            <person name="Sullivan S.A."/>
            <person name="Khouri H."/>
            <person name="Dimitrov G.I."/>
            <person name="Watkins K.L."/>
            <person name="Mulligan S."/>
            <person name="Benton J."/>
            <person name="Radune D."/>
            <person name="Fisher D.J."/>
            <person name="Atkins H.S."/>
            <person name="Hiscox T."/>
            <person name="Jost B.H."/>
            <person name="Billington S.J."/>
            <person name="Songer J.G."/>
            <person name="McClane B.A."/>
            <person name="Titball R.W."/>
            <person name="Rood J.I."/>
            <person name="Melville S.B."/>
            <person name="Paulsen I.T."/>
        </authorList>
    </citation>
    <scope>NUCLEOTIDE SEQUENCE [LARGE SCALE GENOMIC DNA]</scope>
    <source>
        <strain>SM101 / Type A</strain>
    </source>
</reference>
<evidence type="ECO:0000255" key="1">
    <source>
        <dbReference type="HAMAP-Rule" id="MF_01197"/>
    </source>
</evidence>